<proteinExistence type="inferred from homology"/>
<organismHost>
    <name type="scientific">Saccharum officinarum</name>
    <name type="common">Sugarcane</name>
    <dbReference type="NCBI Taxonomy" id="4547"/>
</organismHost>
<organism>
    <name type="scientific">Fiji disease virus (isolate Sugarcane)</name>
    <name type="common">FDV</name>
    <dbReference type="NCBI Taxonomy" id="648172"/>
    <lineage>
        <taxon>Viruses</taxon>
        <taxon>Riboviria</taxon>
        <taxon>Orthornavirae</taxon>
        <taxon>Duplornaviricota</taxon>
        <taxon>Resentoviricetes</taxon>
        <taxon>Reovirales</taxon>
        <taxon>Spinareoviridae</taxon>
        <taxon>Fijivirus</taxon>
        <taxon>Fiji disease virus</taxon>
    </lineage>
</organism>
<evidence type="ECO:0000250" key="1"/>
<gene>
    <name type="primary">S8</name>
</gene>
<dbReference type="EMBL" id="AY297693">
    <property type="protein sequence ID" value="AAP57257.1"/>
    <property type="molecule type" value="Genomic_RNA"/>
</dbReference>
<dbReference type="RefSeq" id="YP_249764.1">
    <property type="nucleotide sequence ID" value="NC_007161.1"/>
</dbReference>
<dbReference type="KEGG" id="vg:5075884"/>
<dbReference type="Proteomes" id="UP000001677">
    <property type="component" value="Genome"/>
</dbReference>
<dbReference type="GO" id="GO:0030430">
    <property type="term" value="C:host cell cytoplasm"/>
    <property type="evidence" value="ECO:0007669"/>
    <property type="project" value="UniProtKB-KW"/>
</dbReference>
<dbReference type="GO" id="GO:0044163">
    <property type="term" value="C:host cytoskeleton"/>
    <property type="evidence" value="ECO:0007669"/>
    <property type="project" value="UniProtKB-SubCell"/>
</dbReference>
<dbReference type="GO" id="GO:0044423">
    <property type="term" value="C:virion component"/>
    <property type="evidence" value="ECO:0007669"/>
    <property type="project" value="UniProtKB-KW"/>
</dbReference>
<protein>
    <recommendedName>
        <fullName>Microtubule-associated protein VP8</fullName>
    </recommendedName>
</protein>
<reference key="1">
    <citation type="journal article" date="2004" name="Arch. Virol.">
        <title>Molecular analysis of Fiji disease virus genome segments 5, 6, 8 and 10.</title>
        <authorList>
            <person name="McQualter R.B."/>
            <person name="Burns P."/>
            <person name="Smith G.R."/>
            <person name="Dale J.L."/>
            <person name="Harding R.M."/>
        </authorList>
    </citation>
    <scope>NUCLEOTIDE SEQUENCE [GENOMIC RNA]</scope>
</reference>
<accession>Q7TF75</accession>
<sequence>MTTGTDVRISLRLLFYELWDNNAKLTKNKTTTPTTSKTTSKILFNSKRTTPTHGYDADYIAELSNNFEFAGFTAPTPHNIRKAFTRLKIMFERMNRYPDEIFLSRHRMLGFVIYQPETSGPIPAFHPKCKFYKLSDNHTHDEKIEIVKNHILNGEIVKTVDLKIDQSFESYYYDKSNAQASQKFLASMHTCDFSFLSFPYINDLTATELGLLPEWAAILLSYMKIINVRGIYNDVVECIDPSQQFCVFEIIGSLTGISNGHFWSVLNDRRSMDVIAKEVEKIALDNQPFXKDGNLNHLLFNSINLSDPLNFNIFHYSFKLKIFPTTLNPLDDLVLLRMKDLIKAFNAGNDVQVIGNKCIGKTRLTAELKKKYLNLLIIDSDDYGKFITLLLNNCPNLFLNNDFEINDEVFEEEIFNVTVIEYANVIRDGTIVIETFFERLMFEIMSLNLTNGEYDVDAIFHSFNARFHAIVNSSMIGYRLFFTKFRKLMFDNFNYTQVLHFVHSYSELSFYPHCVAYITLEPSYNPCCLLYKNRVKRFLSITRSDKGVSSELFLHQFYEKFTTKVNPTPVFVFRYYFGLTNGLSISELALDENT</sequence>
<feature type="chain" id="PRO_0000403400" description="Microtubule-associated protein VP8">
    <location>
        <begin position="1"/>
        <end position="594"/>
    </location>
</feature>
<name>VP8_FDVS</name>
<keyword id="KW-1035">Host cytoplasm</keyword>
<keyword id="KW-1037">Host cytoskeleton</keyword>
<keyword id="KW-1185">Reference proteome</keyword>
<keyword id="KW-0946">Virion</keyword>
<comment type="function">
    <text evidence="1">Minor inner capsid component. Displays NTPase and RNA 5'-triphosphatase (RTPase) activities. May function as a cofactor of polymerase VP1. Associates with microtubules and plays a role in the formation, structural organization and morphology of viral inclusions, where the assembly of cores and the replication of viral RNA occur (By similarity).</text>
</comment>
<comment type="subcellular location">
    <subcellularLocation>
        <location evidence="1">Virion</location>
    </subcellularLocation>
    <subcellularLocation>
        <location evidence="1">Host cytoplasm</location>
        <location evidence="1">Host cytoskeleton</location>
    </subcellularLocation>
</comment>